<comment type="function">
    <text evidence="1">Transfers the 4'-phosphopantetheine moiety from coenzyme A to a Ser of acyl-carrier-protein.</text>
</comment>
<comment type="catalytic activity">
    <reaction evidence="1">
        <text>apo-[ACP] + CoA = holo-[ACP] + adenosine 3',5'-bisphosphate + H(+)</text>
        <dbReference type="Rhea" id="RHEA:12068"/>
        <dbReference type="Rhea" id="RHEA-COMP:9685"/>
        <dbReference type="Rhea" id="RHEA-COMP:9690"/>
        <dbReference type="ChEBI" id="CHEBI:15378"/>
        <dbReference type="ChEBI" id="CHEBI:29999"/>
        <dbReference type="ChEBI" id="CHEBI:57287"/>
        <dbReference type="ChEBI" id="CHEBI:58343"/>
        <dbReference type="ChEBI" id="CHEBI:64479"/>
        <dbReference type="EC" id="2.7.8.7"/>
    </reaction>
</comment>
<comment type="cofactor">
    <cofactor evidence="1">
        <name>Mg(2+)</name>
        <dbReference type="ChEBI" id="CHEBI:18420"/>
    </cofactor>
</comment>
<comment type="subcellular location">
    <subcellularLocation>
        <location evidence="1">Cytoplasm</location>
    </subcellularLocation>
</comment>
<comment type="similarity">
    <text evidence="1">Belongs to the P-Pant transferase superfamily. AcpS family.</text>
</comment>
<organism>
    <name type="scientific">Borreliella burgdorferi (strain ATCC 35210 / DSM 4680 / CIP 102532 / B31)</name>
    <name type="common">Borrelia burgdorferi</name>
    <dbReference type="NCBI Taxonomy" id="224326"/>
    <lineage>
        <taxon>Bacteria</taxon>
        <taxon>Pseudomonadati</taxon>
        <taxon>Spirochaetota</taxon>
        <taxon>Spirochaetia</taxon>
        <taxon>Spirochaetales</taxon>
        <taxon>Borreliaceae</taxon>
        <taxon>Borreliella</taxon>
    </lineage>
</organism>
<feature type="chain" id="PRO_0000175616" description="Holo-[acyl-carrier-protein] synthase">
    <location>
        <begin position="1"/>
        <end position="124"/>
    </location>
</feature>
<feature type="binding site" evidence="1">
    <location>
        <position position="7"/>
    </location>
    <ligand>
        <name>Mg(2+)</name>
        <dbReference type="ChEBI" id="CHEBI:18420"/>
    </ligand>
</feature>
<feature type="binding site" evidence="1">
    <location>
        <position position="55"/>
    </location>
    <ligand>
        <name>Mg(2+)</name>
        <dbReference type="ChEBI" id="CHEBI:18420"/>
    </ligand>
</feature>
<sequence>MKSIGCDIIKVERFKNFLENKKKMERFFTHKEIENFKLKGGSIIESLAGKFAAKESLIKALSPLLQYKINYTLKDIEVIKSLKGNAEFCLHNEVEKFAIKMNLKLYLTISHEKEYAIAFVIVEN</sequence>
<dbReference type="EC" id="2.7.8.7" evidence="1"/>
<dbReference type="EMBL" id="AE000783">
    <property type="protein sequence ID" value="AAC66395.1"/>
    <property type="molecule type" value="Genomic_DNA"/>
</dbReference>
<dbReference type="PIR" id="B70101">
    <property type="entry name" value="B70101"/>
</dbReference>
<dbReference type="RefSeq" id="NP_212144.1">
    <property type="nucleotide sequence ID" value="NC_001318.1"/>
</dbReference>
<dbReference type="RefSeq" id="WP_002556617.1">
    <property type="nucleotide sequence ID" value="NC_001318.1"/>
</dbReference>
<dbReference type="SMR" id="O51043"/>
<dbReference type="STRING" id="224326.BB_0010"/>
<dbReference type="PaxDb" id="224326-BB_0010"/>
<dbReference type="EnsemblBacteria" id="AAC66395">
    <property type="protein sequence ID" value="AAC66395"/>
    <property type="gene ID" value="BB_0010"/>
</dbReference>
<dbReference type="KEGG" id="bbu:BB_0010"/>
<dbReference type="PATRIC" id="fig|224326.49.peg.408"/>
<dbReference type="HOGENOM" id="CLU_089696_5_0_12"/>
<dbReference type="OrthoDB" id="517356at2"/>
<dbReference type="Proteomes" id="UP000001807">
    <property type="component" value="Chromosome"/>
</dbReference>
<dbReference type="GO" id="GO:0005737">
    <property type="term" value="C:cytoplasm"/>
    <property type="evidence" value="ECO:0007669"/>
    <property type="project" value="UniProtKB-SubCell"/>
</dbReference>
<dbReference type="GO" id="GO:0008897">
    <property type="term" value="F:holo-[acyl-carrier-protein] synthase activity"/>
    <property type="evidence" value="ECO:0007669"/>
    <property type="project" value="UniProtKB-UniRule"/>
</dbReference>
<dbReference type="GO" id="GO:0000287">
    <property type="term" value="F:magnesium ion binding"/>
    <property type="evidence" value="ECO:0007669"/>
    <property type="project" value="UniProtKB-UniRule"/>
</dbReference>
<dbReference type="GO" id="GO:0006633">
    <property type="term" value="P:fatty acid biosynthetic process"/>
    <property type="evidence" value="ECO:0007669"/>
    <property type="project" value="UniProtKB-UniRule"/>
</dbReference>
<dbReference type="Gene3D" id="3.90.470.20">
    <property type="entry name" value="4'-phosphopantetheinyl transferase domain"/>
    <property type="match status" value="1"/>
</dbReference>
<dbReference type="HAMAP" id="MF_00101">
    <property type="entry name" value="AcpS"/>
    <property type="match status" value="1"/>
</dbReference>
<dbReference type="InterPro" id="IPR008278">
    <property type="entry name" value="4-PPantetheinyl_Trfase_dom"/>
</dbReference>
<dbReference type="InterPro" id="IPR037143">
    <property type="entry name" value="4-PPantetheinyl_Trfase_dom_sf"/>
</dbReference>
<dbReference type="InterPro" id="IPR002582">
    <property type="entry name" value="ACPS"/>
</dbReference>
<dbReference type="InterPro" id="IPR004568">
    <property type="entry name" value="Ppantetheine-prot_Trfase_dom"/>
</dbReference>
<dbReference type="NCBIfam" id="TIGR00556">
    <property type="entry name" value="pantethn_trn"/>
    <property type="match status" value="1"/>
</dbReference>
<dbReference type="Pfam" id="PF01648">
    <property type="entry name" value="ACPS"/>
    <property type="match status" value="1"/>
</dbReference>
<dbReference type="SUPFAM" id="SSF56214">
    <property type="entry name" value="4'-phosphopantetheinyl transferase"/>
    <property type="match status" value="1"/>
</dbReference>
<accession>O51043</accession>
<protein>
    <recommendedName>
        <fullName evidence="1">Holo-[acyl-carrier-protein] synthase</fullName>
        <shortName evidence="1">Holo-ACP synthase</shortName>
        <ecNumber evidence="1">2.7.8.7</ecNumber>
    </recommendedName>
    <alternativeName>
        <fullName evidence="1">4'-phosphopantetheinyl transferase AcpS</fullName>
    </alternativeName>
</protein>
<evidence type="ECO:0000255" key="1">
    <source>
        <dbReference type="HAMAP-Rule" id="MF_00101"/>
    </source>
</evidence>
<gene>
    <name evidence="1" type="primary">acpS</name>
    <name type="ordered locus">BB_0010</name>
</gene>
<keyword id="KW-0963">Cytoplasm</keyword>
<keyword id="KW-0275">Fatty acid biosynthesis</keyword>
<keyword id="KW-0276">Fatty acid metabolism</keyword>
<keyword id="KW-0444">Lipid biosynthesis</keyword>
<keyword id="KW-0443">Lipid metabolism</keyword>
<keyword id="KW-0460">Magnesium</keyword>
<keyword id="KW-0479">Metal-binding</keyword>
<keyword id="KW-1185">Reference proteome</keyword>
<keyword id="KW-0808">Transferase</keyword>
<reference key="1">
    <citation type="journal article" date="1997" name="Nature">
        <title>Genomic sequence of a Lyme disease spirochaete, Borrelia burgdorferi.</title>
        <authorList>
            <person name="Fraser C.M."/>
            <person name="Casjens S."/>
            <person name="Huang W.M."/>
            <person name="Sutton G.G."/>
            <person name="Clayton R.A."/>
            <person name="Lathigra R."/>
            <person name="White O."/>
            <person name="Ketchum K.A."/>
            <person name="Dodson R.J."/>
            <person name="Hickey E.K."/>
            <person name="Gwinn M.L."/>
            <person name="Dougherty B.A."/>
            <person name="Tomb J.-F."/>
            <person name="Fleischmann R.D."/>
            <person name="Richardson D.L."/>
            <person name="Peterson J.D."/>
            <person name="Kerlavage A.R."/>
            <person name="Quackenbush J."/>
            <person name="Salzberg S.L."/>
            <person name="Hanson M."/>
            <person name="van Vugt R."/>
            <person name="Palmer N."/>
            <person name="Adams M.D."/>
            <person name="Gocayne J.D."/>
            <person name="Weidman J.F."/>
            <person name="Utterback T.R."/>
            <person name="Watthey L."/>
            <person name="McDonald L.A."/>
            <person name="Artiach P."/>
            <person name="Bowman C."/>
            <person name="Garland S.A."/>
            <person name="Fujii C."/>
            <person name="Cotton M.D."/>
            <person name="Horst K."/>
            <person name="Roberts K.M."/>
            <person name="Hatch B."/>
            <person name="Smith H.O."/>
            <person name="Venter J.C."/>
        </authorList>
    </citation>
    <scope>NUCLEOTIDE SEQUENCE [LARGE SCALE GENOMIC DNA]</scope>
    <source>
        <strain>ATCC 35210 / DSM 4680 / CIP 102532 / B31</strain>
    </source>
</reference>
<name>ACPS_BORBU</name>
<proteinExistence type="inferred from homology"/>